<proteinExistence type="inferred from homology"/>
<reference key="1">
    <citation type="journal article" date="2005" name="PLoS Genet.">
        <title>Life in hot carbon monoxide: the complete genome sequence of Carboxydothermus hydrogenoformans Z-2901.</title>
        <authorList>
            <person name="Wu M."/>
            <person name="Ren Q."/>
            <person name="Durkin A.S."/>
            <person name="Daugherty S.C."/>
            <person name="Brinkac L.M."/>
            <person name="Dodson R.J."/>
            <person name="Madupu R."/>
            <person name="Sullivan S.A."/>
            <person name="Kolonay J.F."/>
            <person name="Nelson W.C."/>
            <person name="Tallon L.J."/>
            <person name="Jones K.M."/>
            <person name="Ulrich L.E."/>
            <person name="Gonzalez J.M."/>
            <person name="Zhulin I.B."/>
            <person name="Robb F.T."/>
            <person name="Eisen J.A."/>
        </authorList>
    </citation>
    <scope>NUCLEOTIDE SEQUENCE [LARGE SCALE GENOMIC DNA]</scope>
    <source>
        <strain>ATCC BAA-161 / DSM 6008 / Z-2901</strain>
    </source>
</reference>
<comment type="function">
    <text evidence="1">DNA-dependent RNA polymerase catalyzes the transcription of DNA into RNA using the four ribonucleoside triphosphates as substrates.</text>
</comment>
<comment type="catalytic activity">
    <reaction evidence="1">
        <text>RNA(n) + a ribonucleoside 5'-triphosphate = RNA(n+1) + diphosphate</text>
        <dbReference type="Rhea" id="RHEA:21248"/>
        <dbReference type="Rhea" id="RHEA-COMP:14527"/>
        <dbReference type="Rhea" id="RHEA-COMP:17342"/>
        <dbReference type="ChEBI" id="CHEBI:33019"/>
        <dbReference type="ChEBI" id="CHEBI:61557"/>
        <dbReference type="ChEBI" id="CHEBI:140395"/>
        <dbReference type="EC" id="2.7.7.6"/>
    </reaction>
</comment>
<comment type="subunit">
    <text evidence="1">The RNAP catalytic core consists of 2 alpha, 1 beta, 1 beta' and 1 omega subunit. When a sigma factor is associated with the core the holoenzyme is formed, which can initiate transcription.</text>
</comment>
<comment type="similarity">
    <text evidence="1">Belongs to the RNA polymerase beta chain family.</text>
</comment>
<name>RPOB_CARHZ</name>
<sequence length="1132" mass="127899">MIPVQVGKKIRYSYAKFPEILELPYLIEIQKKSYQWFLDEGLREVFREISPITDFTGNLSLEFLDYYLGKPKYSVEECKERDFTYSAPLRVKVRLLNKETGEIKEQEVFLGDFPLMTEKGTFIFNGAERVVISQMVRSPGVYFSEQVDPNGKKMYLATIIPNRGAWLEFETDVNDHIYVRIDRTRKLPVTVLLKALGYESKGRIAELFDHDDKIIATLERDNTDSREEALIEIYKKLRPGEPPTVESAKTLLDSMFFDPKRYDLGNVGRYKLFKKLNHGVLYRYLEEDGEKEYDKYLNDYVPVKREFIRELTNEDIIYTIRYLLGLMRGQGKVDDIDHLGNRRLRSVGELLQNQFRIGLARMERVVRERMTIQDADSLTPQVLINTRPIVAAIKEFFGSSQLSQFMDQTNPLAELTHKRRLSALGPGGLSRERAGFEVRDVHHSHYGRMCPIETPEGPNIGLIGNLTTYARVNEFGFIETPYRKVDKERGVVTNEIVYLTADEEEKYIIAQANVRLSPEGKFLDEMVNARHGSEILHVEPSKVDFVDVSPKQVFSVATSLIPFLEHDDANRALMGANMQRQAVPLIRTEAPVVGTGIEYKAAKDSGVVVLAKNPGVVERVTADEIVIRNDQGQIDRYKLIKFQRSNQGTCINQKPIVRKGERVEKDQIIADGPSTDHGELALGKNVLVAYMPWEGYNYEDAILISEKLVKEDVFTSIHIEEYECDARDTKLGPEEITRDIPNVGEDALKDLDERGIIRIGAEVRPGDILVGKVTPKGETELTAEERLLRAIFGEKAREVRDTSLRVPHGESGKVVDVKVFSRENGDELSPGVNMLVRVYIAQKRKISVGDKMAGRHGNKGVVARILPEEDMPFLPDGTPVEIVLNPLGVPSRMNIGQILECHLGWAAKALGINVATPIFNGATEEDIFEALRKAGLPEDGKIEVRDGRTGEPFDSRVTVGYVYMLKLAHLVDDKIHARSTGPYSLVTQQPLGGKAQFGGQRFGEMEVWALEAYGAAYTLQEILTIKSDDVVGRVKTYEAIVKGENIPEPGVPESFKVLIKELQSLGLDVKVLTDNDEEVEIKEIDDDIGEKAEEYGLAASIADRDEVKNEYYEEEVEADFEINDDFDGDLED</sequence>
<organism>
    <name type="scientific">Carboxydothermus hydrogenoformans (strain ATCC BAA-161 / DSM 6008 / Z-2901)</name>
    <dbReference type="NCBI Taxonomy" id="246194"/>
    <lineage>
        <taxon>Bacteria</taxon>
        <taxon>Bacillati</taxon>
        <taxon>Bacillota</taxon>
        <taxon>Clostridia</taxon>
        <taxon>Thermoanaerobacterales</taxon>
        <taxon>Thermoanaerobacteraceae</taxon>
        <taxon>Carboxydothermus</taxon>
    </lineage>
</organism>
<gene>
    <name evidence="1" type="primary">rpoB</name>
    <name type="ordered locus">CHY_2318</name>
</gene>
<accession>Q3A9Q7</accession>
<dbReference type="EC" id="2.7.7.6" evidence="1"/>
<dbReference type="EMBL" id="CP000141">
    <property type="protein sequence ID" value="ABB14620.1"/>
    <property type="molecule type" value="Genomic_DNA"/>
</dbReference>
<dbReference type="RefSeq" id="WP_011345200.1">
    <property type="nucleotide sequence ID" value="NC_007503.1"/>
</dbReference>
<dbReference type="SMR" id="Q3A9Q7"/>
<dbReference type="FunCoup" id="Q3A9Q7">
    <property type="interactions" value="399"/>
</dbReference>
<dbReference type="STRING" id="246194.CHY_2318"/>
<dbReference type="KEGG" id="chy:CHY_2318"/>
<dbReference type="eggNOG" id="COG0085">
    <property type="taxonomic scope" value="Bacteria"/>
</dbReference>
<dbReference type="HOGENOM" id="CLU_000524_4_1_9"/>
<dbReference type="InParanoid" id="Q3A9Q7"/>
<dbReference type="OrthoDB" id="9803954at2"/>
<dbReference type="Proteomes" id="UP000002706">
    <property type="component" value="Chromosome"/>
</dbReference>
<dbReference type="GO" id="GO:0000428">
    <property type="term" value="C:DNA-directed RNA polymerase complex"/>
    <property type="evidence" value="ECO:0007669"/>
    <property type="project" value="UniProtKB-KW"/>
</dbReference>
<dbReference type="GO" id="GO:0003677">
    <property type="term" value="F:DNA binding"/>
    <property type="evidence" value="ECO:0007669"/>
    <property type="project" value="UniProtKB-UniRule"/>
</dbReference>
<dbReference type="GO" id="GO:0003899">
    <property type="term" value="F:DNA-directed RNA polymerase activity"/>
    <property type="evidence" value="ECO:0007669"/>
    <property type="project" value="UniProtKB-UniRule"/>
</dbReference>
<dbReference type="GO" id="GO:0032549">
    <property type="term" value="F:ribonucleoside binding"/>
    <property type="evidence" value="ECO:0007669"/>
    <property type="project" value="InterPro"/>
</dbReference>
<dbReference type="GO" id="GO:0006351">
    <property type="term" value="P:DNA-templated transcription"/>
    <property type="evidence" value="ECO:0007669"/>
    <property type="project" value="UniProtKB-UniRule"/>
</dbReference>
<dbReference type="CDD" id="cd00653">
    <property type="entry name" value="RNA_pol_B_RPB2"/>
    <property type="match status" value="1"/>
</dbReference>
<dbReference type="FunFam" id="3.90.1800.10:FF:000001">
    <property type="entry name" value="DNA-directed RNA polymerase subunit beta"/>
    <property type="match status" value="1"/>
</dbReference>
<dbReference type="Gene3D" id="2.40.50.100">
    <property type="match status" value="1"/>
</dbReference>
<dbReference type="Gene3D" id="2.40.50.150">
    <property type="match status" value="1"/>
</dbReference>
<dbReference type="Gene3D" id="3.90.1100.10">
    <property type="match status" value="1"/>
</dbReference>
<dbReference type="Gene3D" id="2.30.150.10">
    <property type="entry name" value="DNA-directed RNA polymerase, beta subunit, external 1 domain"/>
    <property type="match status" value="1"/>
</dbReference>
<dbReference type="Gene3D" id="2.40.270.10">
    <property type="entry name" value="DNA-directed RNA polymerase, subunit 2, domain 6"/>
    <property type="match status" value="2"/>
</dbReference>
<dbReference type="Gene3D" id="3.90.1800.10">
    <property type="entry name" value="RNA polymerase alpha subunit dimerisation domain"/>
    <property type="match status" value="1"/>
</dbReference>
<dbReference type="Gene3D" id="3.90.1110.10">
    <property type="entry name" value="RNA polymerase Rpb2, domain 2"/>
    <property type="match status" value="1"/>
</dbReference>
<dbReference type="HAMAP" id="MF_01321">
    <property type="entry name" value="RNApol_bact_RpoB"/>
    <property type="match status" value="1"/>
</dbReference>
<dbReference type="InterPro" id="IPR042107">
    <property type="entry name" value="DNA-dir_RNA_pol_bsu_ext_1_sf"/>
</dbReference>
<dbReference type="InterPro" id="IPR019462">
    <property type="entry name" value="DNA-dir_RNA_pol_bsu_external_1"/>
</dbReference>
<dbReference type="InterPro" id="IPR015712">
    <property type="entry name" value="DNA-dir_RNA_pol_su2"/>
</dbReference>
<dbReference type="InterPro" id="IPR007120">
    <property type="entry name" value="DNA-dir_RNAP_su2_dom"/>
</dbReference>
<dbReference type="InterPro" id="IPR037033">
    <property type="entry name" value="DNA-dir_RNAP_su2_hyb_sf"/>
</dbReference>
<dbReference type="InterPro" id="IPR010243">
    <property type="entry name" value="RNA_pol_bsu_bac"/>
</dbReference>
<dbReference type="InterPro" id="IPR007121">
    <property type="entry name" value="RNA_pol_bsu_CS"/>
</dbReference>
<dbReference type="InterPro" id="IPR007644">
    <property type="entry name" value="RNA_pol_bsu_protrusion"/>
</dbReference>
<dbReference type="InterPro" id="IPR007642">
    <property type="entry name" value="RNA_pol_Rpb2_2"/>
</dbReference>
<dbReference type="InterPro" id="IPR037034">
    <property type="entry name" value="RNA_pol_Rpb2_2_sf"/>
</dbReference>
<dbReference type="InterPro" id="IPR007645">
    <property type="entry name" value="RNA_pol_Rpb2_3"/>
</dbReference>
<dbReference type="InterPro" id="IPR007641">
    <property type="entry name" value="RNA_pol_Rpb2_7"/>
</dbReference>
<dbReference type="InterPro" id="IPR014724">
    <property type="entry name" value="RNA_pol_RPB2_OB-fold"/>
</dbReference>
<dbReference type="NCBIfam" id="NF001616">
    <property type="entry name" value="PRK00405.1"/>
    <property type="match status" value="1"/>
</dbReference>
<dbReference type="NCBIfam" id="TIGR02013">
    <property type="entry name" value="rpoB"/>
    <property type="match status" value="1"/>
</dbReference>
<dbReference type="PANTHER" id="PTHR20856">
    <property type="entry name" value="DNA-DIRECTED RNA POLYMERASE I SUBUNIT 2"/>
    <property type="match status" value="1"/>
</dbReference>
<dbReference type="Pfam" id="PF04563">
    <property type="entry name" value="RNA_pol_Rpb2_1"/>
    <property type="match status" value="1"/>
</dbReference>
<dbReference type="Pfam" id="PF04561">
    <property type="entry name" value="RNA_pol_Rpb2_2"/>
    <property type="match status" value="2"/>
</dbReference>
<dbReference type="Pfam" id="PF04565">
    <property type="entry name" value="RNA_pol_Rpb2_3"/>
    <property type="match status" value="1"/>
</dbReference>
<dbReference type="Pfam" id="PF10385">
    <property type="entry name" value="RNA_pol_Rpb2_45"/>
    <property type="match status" value="1"/>
</dbReference>
<dbReference type="Pfam" id="PF00562">
    <property type="entry name" value="RNA_pol_Rpb2_6"/>
    <property type="match status" value="1"/>
</dbReference>
<dbReference type="Pfam" id="PF04560">
    <property type="entry name" value="RNA_pol_Rpb2_7"/>
    <property type="match status" value="1"/>
</dbReference>
<dbReference type="SUPFAM" id="SSF64484">
    <property type="entry name" value="beta and beta-prime subunits of DNA dependent RNA-polymerase"/>
    <property type="match status" value="1"/>
</dbReference>
<dbReference type="PROSITE" id="PS01166">
    <property type="entry name" value="RNA_POL_BETA"/>
    <property type="match status" value="1"/>
</dbReference>
<protein>
    <recommendedName>
        <fullName evidence="1">DNA-directed RNA polymerase subunit beta</fullName>
        <shortName evidence="1">RNAP subunit beta</shortName>
        <ecNumber evidence="1">2.7.7.6</ecNumber>
    </recommendedName>
    <alternativeName>
        <fullName evidence="1">RNA polymerase subunit beta</fullName>
    </alternativeName>
    <alternativeName>
        <fullName evidence="1">Transcriptase subunit beta</fullName>
    </alternativeName>
</protein>
<feature type="chain" id="PRO_0000224042" description="DNA-directed RNA polymerase subunit beta">
    <location>
        <begin position="1"/>
        <end position="1132"/>
    </location>
</feature>
<evidence type="ECO:0000255" key="1">
    <source>
        <dbReference type="HAMAP-Rule" id="MF_01321"/>
    </source>
</evidence>
<keyword id="KW-0240">DNA-directed RNA polymerase</keyword>
<keyword id="KW-0548">Nucleotidyltransferase</keyword>
<keyword id="KW-1185">Reference proteome</keyword>
<keyword id="KW-0804">Transcription</keyword>
<keyword id="KW-0808">Transferase</keyword>